<gene>
    <name type="primary">Spns3</name>
</gene>
<accession>Q9D232</accession>
<accession>B2RX04</accession>
<accession>Q3U0X5</accession>
<accession>Q8BYA9</accession>
<evidence type="ECO:0000250" key="1"/>
<evidence type="ECO:0000255" key="2"/>
<evidence type="ECO:0000256" key="3">
    <source>
        <dbReference type="SAM" id="MobiDB-lite"/>
    </source>
</evidence>
<evidence type="ECO:0000303" key="4">
    <source>
    </source>
</evidence>
<evidence type="ECO:0000305" key="5"/>
<feature type="chain" id="PRO_0000305047" description="Protein spinster homolog 3">
    <location>
        <begin position="1"/>
        <end position="514"/>
    </location>
</feature>
<feature type="transmembrane region" description="Helical" evidence="2">
    <location>
        <begin position="54"/>
        <end position="74"/>
    </location>
</feature>
<feature type="transmembrane region" description="Helical" evidence="2">
    <location>
        <begin position="88"/>
        <end position="108"/>
    </location>
</feature>
<feature type="transmembrane region" description="Helical" evidence="2">
    <location>
        <begin position="116"/>
        <end position="136"/>
    </location>
</feature>
<feature type="transmembrane region" description="Helical" evidence="2">
    <location>
        <begin position="149"/>
        <end position="169"/>
    </location>
</feature>
<feature type="transmembrane region" description="Helical" evidence="2">
    <location>
        <begin position="176"/>
        <end position="196"/>
    </location>
</feature>
<feature type="transmembrane region" description="Helical" evidence="2">
    <location>
        <begin position="212"/>
        <end position="232"/>
    </location>
</feature>
<feature type="transmembrane region" description="Helical" evidence="2">
    <location>
        <begin position="264"/>
        <end position="284"/>
    </location>
</feature>
<feature type="transmembrane region" description="Helical" evidence="2">
    <location>
        <begin position="313"/>
        <end position="333"/>
    </location>
</feature>
<feature type="transmembrane region" description="Helical" evidence="2">
    <location>
        <begin position="347"/>
        <end position="367"/>
    </location>
</feature>
<feature type="transmembrane region" description="Helical" evidence="2">
    <location>
        <begin position="376"/>
        <end position="396"/>
    </location>
</feature>
<feature type="transmembrane region" description="Helical" evidence="2">
    <location>
        <begin position="415"/>
        <end position="435"/>
    </location>
</feature>
<feature type="transmembrane region" description="Helical" evidence="2">
    <location>
        <begin position="453"/>
        <end position="473"/>
    </location>
</feature>
<feature type="region of interest" description="Disordered" evidence="3">
    <location>
        <begin position="1"/>
        <end position="22"/>
    </location>
</feature>
<feature type="region of interest" description="Disordered" evidence="3">
    <location>
        <begin position="482"/>
        <end position="514"/>
    </location>
</feature>
<feature type="compositionally biased region" description="Low complexity" evidence="3">
    <location>
        <begin position="9"/>
        <end position="21"/>
    </location>
</feature>
<feature type="compositionally biased region" description="Polar residues" evidence="3">
    <location>
        <begin position="497"/>
        <end position="514"/>
    </location>
</feature>
<feature type="splice variant" id="VSP_028199" description="In isoform 2." evidence="4">
    <location>
        <begin position="71"/>
        <end position="92"/>
    </location>
</feature>
<feature type="sequence conflict" description="In Ref. 3; EDL12688 and 4; AAI50779." evidence="5" ref="3 4">
    <original>S</original>
    <variation>G</variation>
    <location>
        <position position="17"/>
    </location>
</feature>
<feature type="sequence conflict" description="In Ref. 3; EDL12688 and 4; AAI50779." evidence="5" ref="3 4">
    <original>P</original>
    <variation>S</variation>
    <location>
        <position position="40"/>
    </location>
</feature>
<feature type="sequence conflict" description="In Ref. 3; EDL12688 and 4; AAI50779." evidence="5" ref="3 4">
    <original>I</original>
    <variation>V</variation>
    <location>
        <position position="58"/>
    </location>
</feature>
<feature type="sequence conflict" description="In Ref. 1; BAE33726." evidence="5" ref="1">
    <original>K</original>
    <variation>E</variation>
    <location>
        <position position="238"/>
    </location>
</feature>
<feature type="sequence conflict" description="In Ref. 1; BAE33726." evidence="5" ref="1">
    <original>A</original>
    <variation>T</variation>
    <location>
        <position position="458"/>
    </location>
</feature>
<keyword id="KW-0025">Alternative splicing</keyword>
<keyword id="KW-0445">Lipid transport</keyword>
<keyword id="KW-0472">Membrane</keyword>
<keyword id="KW-1185">Reference proteome</keyword>
<keyword id="KW-0812">Transmembrane</keyword>
<keyword id="KW-1133">Transmembrane helix</keyword>
<keyword id="KW-0813">Transport</keyword>
<reference key="1">
    <citation type="journal article" date="2005" name="Science">
        <title>The transcriptional landscape of the mammalian genome.</title>
        <authorList>
            <person name="Carninci P."/>
            <person name="Kasukawa T."/>
            <person name="Katayama S."/>
            <person name="Gough J."/>
            <person name="Frith M.C."/>
            <person name="Maeda N."/>
            <person name="Oyama R."/>
            <person name="Ravasi T."/>
            <person name="Lenhard B."/>
            <person name="Wells C."/>
            <person name="Kodzius R."/>
            <person name="Shimokawa K."/>
            <person name="Bajic V.B."/>
            <person name="Brenner S.E."/>
            <person name="Batalov S."/>
            <person name="Forrest A.R."/>
            <person name="Zavolan M."/>
            <person name="Davis M.J."/>
            <person name="Wilming L.G."/>
            <person name="Aidinis V."/>
            <person name="Allen J.E."/>
            <person name="Ambesi-Impiombato A."/>
            <person name="Apweiler R."/>
            <person name="Aturaliya R.N."/>
            <person name="Bailey T.L."/>
            <person name="Bansal M."/>
            <person name="Baxter L."/>
            <person name="Beisel K.W."/>
            <person name="Bersano T."/>
            <person name="Bono H."/>
            <person name="Chalk A.M."/>
            <person name="Chiu K.P."/>
            <person name="Choudhary V."/>
            <person name="Christoffels A."/>
            <person name="Clutterbuck D.R."/>
            <person name="Crowe M.L."/>
            <person name="Dalla E."/>
            <person name="Dalrymple B.P."/>
            <person name="de Bono B."/>
            <person name="Della Gatta G."/>
            <person name="di Bernardo D."/>
            <person name="Down T."/>
            <person name="Engstrom P."/>
            <person name="Fagiolini M."/>
            <person name="Faulkner G."/>
            <person name="Fletcher C.F."/>
            <person name="Fukushima T."/>
            <person name="Furuno M."/>
            <person name="Futaki S."/>
            <person name="Gariboldi M."/>
            <person name="Georgii-Hemming P."/>
            <person name="Gingeras T.R."/>
            <person name="Gojobori T."/>
            <person name="Green R.E."/>
            <person name="Gustincich S."/>
            <person name="Harbers M."/>
            <person name="Hayashi Y."/>
            <person name="Hensch T.K."/>
            <person name="Hirokawa N."/>
            <person name="Hill D."/>
            <person name="Huminiecki L."/>
            <person name="Iacono M."/>
            <person name="Ikeo K."/>
            <person name="Iwama A."/>
            <person name="Ishikawa T."/>
            <person name="Jakt M."/>
            <person name="Kanapin A."/>
            <person name="Katoh M."/>
            <person name="Kawasawa Y."/>
            <person name="Kelso J."/>
            <person name="Kitamura H."/>
            <person name="Kitano H."/>
            <person name="Kollias G."/>
            <person name="Krishnan S.P."/>
            <person name="Kruger A."/>
            <person name="Kummerfeld S.K."/>
            <person name="Kurochkin I.V."/>
            <person name="Lareau L.F."/>
            <person name="Lazarevic D."/>
            <person name="Lipovich L."/>
            <person name="Liu J."/>
            <person name="Liuni S."/>
            <person name="McWilliam S."/>
            <person name="Madan Babu M."/>
            <person name="Madera M."/>
            <person name="Marchionni L."/>
            <person name="Matsuda H."/>
            <person name="Matsuzawa S."/>
            <person name="Miki H."/>
            <person name="Mignone F."/>
            <person name="Miyake S."/>
            <person name="Morris K."/>
            <person name="Mottagui-Tabar S."/>
            <person name="Mulder N."/>
            <person name="Nakano N."/>
            <person name="Nakauchi H."/>
            <person name="Ng P."/>
            <person name="Nilsson R."/>
            <person name="Nishiguchi S."/>
            <person name="Nishikawa S."/>
            <person name="Nori F."/>
            <person name="Ohara O."/>
            <person name="Okazaki Y."/>
            <person name="Orlando V."/>
            <person name="Pang K.C."/>
            <person name="Pavan W.J."/>
            <person name="Pavesi G."/>
            <person name="Pesole G."/>
            <person name="Petrovsky N."/>
            <person name="Piazza S."/>
            <person name="Reed J."/>
            <person name="Reid J.F."/>
            <person name="Ring B.Z."/>
            <person name="Ringwald M."/>
            <person name="Rost B."/>
            <person name="Ruan Y."/>
            <person name="Salzberg S.L."/>
            <person name="Sandelin A."/>
            <person name="Schneider C."/>
            <person name="Schoenbach C."/>
            <person name="Sekiguchi K."/>
            <person name="Semple C.A."/>
            <person name="Seno S."/>
            <person name="Sessa L."/>
            <person name="Sheng Y."/>
            <person name="Shibata Y."/>
            <person name="Shimada H."/>
            <person name="Shimada K."/>
            <person name="Silva D."/>
            <person name="Sinclair B."/>
            <person name="Sperling S."/>
            <person name="Stupka E."/>
            <person name="Sugiura K."/>
            <person name="Sultana R."/>
            <person name="Takenaka Y."/>
            <person name="Taki K."/>
            <person name="Tammoja K."/>
            <person name="Tan S.L."/>
            <person name="Tang S."/>
            <person name="Taylor M.S."/>
            <person name="Tegner J."/>
            <person name="Teichmann S.A."/>
            <person name="Ueda H.R."/>
            <person name="van Nimwegen E."/>
            <person name="Verardo R."/>
            <person name="Wei C.L."/>
            <person name="Yagi K."/>
            <person name="Yamanishi H."/>
            <person name="Zabarovsky E."/>
            <person name="Zhu S."/>
            <person name="Zimmer A."/>
            <person name="Hide W."/>
            <person name="Bult C."/>
            <person name="Grimmond S.M."/>
            <person name="Teasdale R.D."/>
            <person name="Liu E.T."/>
            <person name="Brusic V."/>
            <person name="Quackenbush J."/>
            <person name="Wahlestedt C."/>
            <person name="Mattick J.S."/>
            <person name="Hume D.A."/>
            <person name="Kai C."/>
            <person name="Sasaki D."/>
            <person name="Tomaru Y."/>
            <person name="Fukuda S."/>
            <person name="Kanamori-Katayama M."/>
            <person name="Suzuki M."/>
            <person name="Aoki J."/>
            <person name="Arakawa T."/>
            <person name="Iida J."/>
            <person name="Imamura K."/>
            <person name="Itoh M."/>
            <person name="Kato T."/>
            <person name="Kawaji H."/>
            <person name="Kawagashira N."/>
            <person name="Kawashima T."/>
            <person name="Kojima M."/>
            <person name="Kondo S."/>
            <person name="Konno H."/>
            <person name="Nakano K."/>
            <person name="Ninomiya N."/>
            <person name="Nishio T."/>
            <person name="Okada M."/>
            <person name="Plessy C."/>
            <person name="Shibata K."/>
            <person name="Shiraki T."/>
            <person name="Suzuki S."/>
            <person name="Tagami M."/>
            <person name="Waki K."/>
            <person name="Watahiki A."/>
            <person name="Okamura-Oho Y."/>
            <person name="Suzuki H."/>
            <person name="Kawai J."/>
            <person name="Hayashizaki Y."/>
        </authorList>
    </citation>
    <scope>NUCLEOTIDE SEQUENCE [LARGE SCALE MRNA] (ISOFORMS 1 AND 2)</scope>
    <source>
        <strain>C57BL/6J</strain>
        <strain>NOD</strain>
        <tissue>Bone</tissue>
        <tissue>Spleen</tissue>
        <tissue>Thymus</tissue>
    </source>
</reference>
<reference key="2">
    <citation type="journal article" date="2009" name="PLoS Biol.">
        <title>Lineage-specific biology revealed by a finished genome assembly of the mouse.</title>
        <authorList>
            <person name="Church D.M."/>
            <person name="Goodstadt L."/>
            <person name="Hillier L.W."/>
            <person name="Zody M.C."/>
            <person name="Goldstein S."/>
            <person name="She X."/>
            <person name="Bult C.J."/>
            <person name="Agarwala R."/>
            <person name="Cherry J.L."/>
            <person name="DiCuccio M."/>
            <person name="Hlavina W."/>
            <person name="Kapustin Y."/>
            <person name="Meric P."/>
            <person name="Maglott D."/>
            <person name="Birtle Z."/>
            <person name="Marques A.C."/>
            <person name="Graves T."/>
            <person name="Zhou S."/>
            <person name="Teague B."/>
            <person name="Potamousis K."/>
            <person name="Churas C."/>
            <person name="Place M."/>
            <person name="Herschleb J."/>
            <person name="Runnheim R."/>
            <person name="Forrest D."/>
            <person name="Amos-Landgraf J."/>
            <person name="Schwartz D.C."/>
            <person name="Cheng Z."/>
            <person name="Lindblad-Toh K."/>
            <person name="Eichler E.E."/>
            <person name="Ponting C.P."/>
        </authorList>
    </citation>
    <scope>NUCLEOTIDE SEQUENCE [LARGE SCALE GENOMIC DNA]</scope>
    <source>
        <strain>C57BL/6J</strain>
    </source>
</reference>
<reference key="3">
    <citation type="submission" date="2005-07" db="EMBL/GenBank/DDBJ databases">
        <authorList>
            <person name="Mural R.J."/>
            <person name="Adams M.D."/>
            <person name="Myers E.W."/>
            <person name="Smith H.O."/>
            <person name="Venter J.C."/>
        </authorList>
    </citation>
    <scope>NUCLEOTIDE SEQUENCE [LARGE SCALE GENOMIC DNA]</scope>
</reference>
<reference key="4">
    <citation type="journal article" date="2004" name="Genome Res.">
        <title>The status, quality, and expansion of the NIH full-length cDNA project: the Mammalian Gene Collection (MGC).</title>
        <authorList>
            <consortium name="The MGC Project Team"/>
        </authorList>
    </citation>
    <scope>NUCLEOTIDE SEQUENCE [LARGE SCALE MRNA]</scope>
    <source>
        <tissue>Brain</tissue>
    </source>
</reference>
<dbReference type="EMBL" id="AK020683">
    <property type="protein sequence ID" value="BAB32173.1"/>
    <property type="molecule type" value="mRNA"/>
</dbReference>
<dbReference type="EMBL" id="AK041376">
    <property type="protein sequence ID" value="BAC30922.1"/>
    <property type="molecule type" value="mRNA"/>
</dbReference>
<dbReference type="EMBL" id="AK156479">
    <property type="protein sequence ID" value="BAE33726.1"/>
    <property type="molecule type" value="mRNA"/>
</dbReference>
<dbReference type="EMBL" id="AL662812">
    <property type="status" value="NOT_ANNOTATED_CDS"/>
    <property type="molecule type" value="Genomic_DNA"/>
</dbReference>
<dbReference type="EMBL" id="CH466596">
    <property type="protein sequence ID" value="EDL12688.1"/>
    <property type="molecule type" value="Genomic_DNA"/>
</dbReference>
<dbReference type="EMBL" id="BC150778">
    <property type="protein sequence ID" value="AAI50779.1"/>
    <property type="molecule type" value="mRNA"/>
</dbReference>
<dbReference type="CCDS" id="CCDS24987.1">
    <molecule id="Q9D232-1"/>
</dbReference>
<dbReference type="RefSeq" id="NP_084208.1">
    <molecule id="Q9D232-1"/>
    <property type="nucleotide sequence ID" value="NM_029932.3"/>
</dbReference>
<dbReference type="SMR" id="Q9D232"/>
<dbReference type="FunCoup" id="Q9D232">
    <property type="interactions" value="71"/>
</dbReference>
<dbReference type="STRING" id="10090.ENSMUSP00000090617"/>
<dbReference type="iPTMnet" id="Q9D232"/>
<dbReference type="PhosphoSitePlus" id="Q9D232"/>
<dbReference type="PaxDb" id="10090-ENSMUSP00000090617"/>
<dbReference type="Antibodypedia" id="11205">
    <property type="antibodies" value="63 antibodies from 13 providers"/>
</dbReference>
<dbReference type="DNASU" id="77577"/>
<dbReference type="Ensembl" id="ENSMUST00000021154.7">
    <molecule id="Q9D232-2"/>
    <property type="protein sequence ID" value="ENSMUSP00000021154.7"/>
    <property type="gene ID" value="ENSMUSG00000020798.15"/>
</dbReference>
<dbReference type="Ensembl" id="ENSMUST00000092940.13">
    <molecule id="Q9D232-1"/>
    <property type="protein sequence ID" value="ENSMUSP00000090617.7"/>
    <property type="gene ID" value="ENSMUSG00000020798.15"/>
</dbReference>
<dbReference type="GeneID" id="77577"/>
<dbReference type="KEGG" id="mmu:77577"/>
<dbReference type="UCSC" id="uc007jzb.1">
    <molecule id="Q9D232-1"/>
    <property type="organism name" value="mouse"/>
</dbReference>
<dbReference type="UCSC" id="uc011xyk.1">
    <molecule id="Q9D232-2"/>
    <property type="organism name" value="mouse"/>
</dbReference>
<dbReference type="AGR" id="MGI:1924827"/>
<dbReference type="CTD" id="201305"/>
<dbReference type="MGI" id="MGI:1924827">
    <property type="gene designation" value="Spns3"/>
</dbReference>
<dbReference type="VEuPathDB" id="HostDB:ENSMUSG00000020798"/>
<dbReference type="eggNOG" id="KOG1330">
    <property type="taxonomic scope" value="Eukaryota"/>
</dbReference>
<dbReference type="GeneTree" id="ENSGT00390000005976"/>
<dbReference type="HOGENOM" id="CLU_001265_5_12_1"/>
<dbReference type="InParanoid" id="Q9D232"/>
<dbReference type="OMA" id="YTCVYTA"/>
<dbReference type="OrthoDB" id="6770063at2759"/>
<dbReference type="PhylomeDB" id="Q9D232"/>
<dbReference type="TreeFam" id="TF314395"/>
<dbReference type="BioGRID-ORCS" id="77577">
    <property type="hits" value="7 hits in 76 CRISPR screens"/>
</dbReference>
<dbReference type="PRO" id="PR:Q9D232"/>
<dbReference type="Proteomes" id="UP000000589">
    <property type="component" value="Chromosome 11"/>
</dbReference>
<dbReference type="RNAct" id="Q9D232">
    <property type="molecule type" value="protein"/>
</dbReference>
<dbReference type="Bgee" id="ENSMUSG00000020798">
    <property type="expression patterns" value="Expressed in granulocyte and 49 other cell types or tissues"/>
</dbReference>
<dbReference type="GO" id="GO:0016020">
    <property type="term" value="C:membrane"/>
    <property type="evidence" value="ECO:0007669"/>
    <property type="project" value="UniProtKB-SubCell"/>
</dbReference>
<dbReference type="GO" id="GO:0022857">
    <property type="term" value="F:transmembrane transporter activity"/>
    <property type="evidence" value="ECO:0007669"/>
    <property type="project" value="InterPro"/>
</dbReference>
<dbReference type="GO" id="GO:0006869">
    <property type="term" value="P:lipid transport"/>
    <property type="evidence" value="ECO:0007669"/>
    <property type="project" value="UniProtKB-KW"/>
</dbReference>
<dbReference type="CDD" id="cd17328">
    <property type="entry name" value="MFS_spinster_like"/>
    <property type="match status" value="1"/>
</dbReference>
<dbReference type="Gene3D" id="1.20.1250.20">
    <property type="entry name" value="MFS general substrate transporter like domains"/>
    <property type="match status" value="1"/>
</dbReference>
<dbReference type="InterPro" id="IPR011701">
    <property type="entry name" value="MFS"/>
</dbReference>
<dbReference type="InterPro" id="IPR020846">
    <property type="entry name" value="MFS_dom"/>
</dbReference>
<dbReference type="InterPro" id="IPR044770">
    <property type="entry name" value="MFS_spinster-like"/>
</dbReference>
<dbReference type="InterPro" id="IPR036259">
    <property type="entry name" value="MFS_trans_sf"/>
</dbReference>
<dbReference type="PANTHER" id="PTHR23505:SF3">
    <property type="entry name" value="PROTEIN SPINSTER HOMOLOG 3"/>
    <property type="match status" value="1"/>
</dbReference>
<dbReference type="PANTHER" id="PTHR23505">
    <property type="entry name" value="SPINSTER"/>
    <property type="match status" value="1"/>
</dbReference>
<dbReference type="Pfam" id="PF07690">
    <property type="entry name" value="MFS_1"/>
    <property type="match status" value="1"/>
</dbReference>
<dbReference type="SUPFAM" id="SSF103473">
    <property type="entry name" value="MFS general substrate transporter"/>
    <property type="match status" value="1"/>
</dbReference>
<dbReference type="PROSITE" id="PS50850">
    <property type="entry name" value="MFS"/>
    <property type="match status" value="1"/>
</dbReference>
<comment type="function">
    <text evidence="1">Sphingolipid transporter.</text>
</comment>
<comment type="subcellular location">
    <subcellularLocation>
        <location evidence="5">Membrane</location>
        <topology evidence="5">Multi-pass membrane protein</topology>
    </subcellularLocation>
</comment>
<comment type="alternative products">
    <event type="alternative splicing"/>
    <isoform>
        <id>Q9D232-1</id>
        <name>1</name>
        <sequence type="displayed"/>
    </isoform>
    <isoform>
        <id>Q9D232-2</id>
        <name>2</name>
        <sequence type="described" ref="VSP_028199"/>
    </isoform>
</comment>
<comment type="similarity">
    <text evidence="5">Belongs to the major facilitator superfamily. Spinster (TC 2.A.1.49) family.</text>
</comment>
<name>SPNS3_MOUSE</name>
<sequence length="514" mass="55456">MSTECLKPQTGGPQSQSLSQGGQYGALASGTCLPPSTPVPWSLPRWRAYLAAAVLCYINLLNYMNWFIIPGVLLDVQKYFHISDSHAGLLQTVFISCLLVSAPVFGYLGDRYNRKAILSFGILLWSGAGLSSSFISYQYSWLFFLSRGFVGTGAASYSTIAPTVLGDLFVKDQRTCALAVFYIFIPVGSGLGYVLGSTVAELTGNWRWALRLMPCLDAMALALLILLVPDVPRGAAEKQGEVAVRAPRSSWCEDVRYLGRNWSFVFSTLGVTAIAFVTGALGFWAPKFLFEARVVHGLQLPCFQEQCHSQDSLIFGALTVATGIIGVMLGAEASRRYKKVNPRAEPLICASSLFATAPCLYLALILASRTLLASYVFLALGELLLSCNWAVVADILLSVVVPRCRGTAEALQITVAHVLGDAGSPYLTGLISSVLQAERPDSYLQHFLSLQHSFLCCAFAIVLGGGFFLLTALHLEKDQARARQPGKGTLDSKDIASRNTESQGLLSGTSTPTE</sequence>
<protein>
    <recommendedName>
        <fullName>Protein spinster homolog 3</fullName>
    </recommendedName>
</protein>
<organism>
    <name type="scientific">Mus musculus</name>
    <name type="common">Mouse</name>
    <dbReference type="NCBI Taxonomy" id="10090"/>
    <lineage>
        <taxon>Eukaryota</taxon>
        <taxon>Metazoa</taxon>
        <taxon>Chordata</taxon>
        <taxon>Craniata</taxon>
        <taxon>Vertebrata</taxon>
        <taxon>Euteleostomi</taxon>
        <taxon>Mammalia</taxon>
        <taxon>Eutheria</taxon>
        <taxon>Euarchontoglires</taxon>
        <taxon>Glires</taxon>
        <taxon>Rodentia</taxon>
        <taxon>Myomorpha</taxon>
        <taxon>Muroidea</taxon>
        <taxon>Muridae</taxon>
        <taxon>Murinae</taxon>
        <taxon>Mus</taxon>
        <taxon>Mus</taxon>
    </lineage>
</organism>
<proteinExistence type="evidence at transcript level"/>